<accession>Q2T101</accession>
<protein>
    <recommendedName>
        <fullName evidence="1">tRNA-2-methylthio-N(6)-dimethylallyladenosine synthase</fullName>
        <ecNumber evidence="1">2.8.4.3</ecNumber>
    </recommendedName>
    <alternativeName>
        <fullName evidence="1">(Dimethylallyl)adenosine tRNA methylthiotransferase MiaB</fullName>
    </alternativeName>
    <alternativeName>
        <fullName evidence="1">tRNA-i(6)A37 methylthiotransferase</fullName>
    </alternativeName>
</protein>
<reference key="1">
    <citation type="journal article" date="2005" name="BMC Genomics">
        <title>Bacterial genome adaptation to niches: divergence of the potential virulence genes in three Burkholderia species of different survival strategies.</title>
        <authorList>
            <person name="Kim H.S."/>
            <person name="Schell M.A."/>
            <person name="Yu Y."/>
            <person name="Ulrich R.L."/>
            <person name="Sarria S.H."/>
            <person name="Nierman W.C."/>
            <person name="DeShazer D."/>
        </authorList>
    </citation>
    <scope>NUCLEOTIDE SEQUENCE [LARGE SCALE GENOMIC DNA]</scope>
    <source>
        <strain>ATCC 700388 / DSM 13276 / CCUG 48851 / CIP 106301 / E264</strain>
    </source>
</reference>
<dbReference type="EC" id="2.8.4.3" evidence="1"/>
<dbReference type="EMBL" id="CP000086">
    <property type="protein sequence ID" value="ABC37512.1"/>
    <property type="molecule type" value="Genomic_DNA"/>
</dbReference>
<dbReference type="RefSeq" id="WP_009892886.1">
    <property type="nucleotide sequence ID" value="NZ_CP008785.1"/>
</dbReference>
<dbReference type="SMR" id="Q2T101"/>
<dbReference type="GeneID" id="45120352"/>
<dbReference type="KEGG" id="bte:BTH_I0591"/>
<dbReference type="HOGENOM" id="CLU_018697_2_0_4"/>
<dbReference type="Proteomes" id="UP000001930">
    <property type="component" value="Chromosome I"/>
</dbReference>
<dbReference type="GO" id="GO:0005829">
    <property type="term" value="C:cytosol"/>
    <property type="evidence" value="ECO:0007669"/>
    <property type="project" value="TreeGrafter"/>
</dbReference>
<dbReference type="GO" id="GO:0051539">
    <property type="term" value="F:4 iron, 4 sulfur cluster binding"/>
    <property type="evidence" value="ECO:0007669"/>
    <property type="project" value="UniProtKB-UniRule"/>
</dbReference>
<dbReference type="GO" id="GO:0046872">
    <property type="term" value="F:metal ion binding"/>
    <property type="evidence" value="ECO:0007669"/>
    <property type="project" value="UniProtKB-KW"/>
</dbReference>
<dbReference type="GO" id="GO:0035597">
    <property type="term" value="F:N6-isopentenyladenosine methylthiotransferase activity"/>
    <property type="evidence" value="ECO:0007669"/>
    <property type="project" value="TreeGrafter"/>
</dbReference>
<dbReference type="CDD" id="cd01335">
    <property type="entry name" value="Radical_SAM"/>
    <property type="match status" value="1"/>
</dbReference>
<dbReference type="FunFam" id="3.40.50.12160:FF:000001">
    <property type="entry name" value="tRNA-2-methylthio-N(6)-dimethylallyladenosine synthase"/>
    <property type="match status" value="1"/>
</dbReference>
<dbReference type="FunFam" id="3.80.30.20:FF:000001">
    <property type="entry name" value="tRNA-2-methylthio-N(6)-dimethylallyladenosine synthase 2"/>
    <property type="match status" value="1"/>
</dbReference>
<dbReference type="Gene3D" id="3.40.50.12160">
    <property type="entry name" value="Methylthiotransferase, N-terminal domain"/>
    <property type="match status" value="1"/>
</dbReference>
<dbReference type="Gene3D" id="3.80.30.20">
    <property type="entry name" value="tm_1862 like domain"/>
    <property type="match status" value="1"/>
</dbReference>
<dbReference type="HAMAP" id="MF_01864">
    <property type="entry name" value="tRNA_metthiotr_MiaB"/>
    <property type="match status" value="1"/>
</dbReference>
<dbReference type="InterPro" id="IPR006638">
    <property type="entry name" value="Elp3/MiaA/NifB-like_rSAM"/>
</dbReference>
<dbReference type="InterPro" id="IPR005839">
    <property type="entry name" value="Methylthiotransferase"/>
</dbReference>
<dbReference type="InterPro" id="IPR020612">
    <property type="entry name" value="Methylthiotransferase_CS"/>
</dbReference>
<dbReference type="InterPro" id="IPR013848">
    <property type="entry name" value="Methylthiotransferase_N"/>
</dbReference>
<dbReference type="InterPro" id="IPR038135">
    <property type="entry name" value="Methylthiotransferase_N_sf"/>
</dbReference>
<dbReference type="InterPro" id="IPR006463">
    <property type="entry name" value="MiaB_methiolase"/>
</dbReference>
<dbReference type="InterPro" id="IPR007197">
    <property type="entry name" value="rSAM"/>
</dbReference>
<dbReference type="InterPro" id="IPR023404">
    <property type="entry name" value="rSAM_horseshoe"/>
</dbReference>
<dbReference type="InterPro" id="IPR002792">
    <property type="entry name" value="TRAM_dom"/>
</dbReference>
<dbReference type="NCBIfam" id="TIGR01574">
    <property type="entry name" value="miaB-methiolase"/>
    <property type="match status" value="1"/>
</dbReference>
<dbReference type="NCBIfam" id="TIGR00089">
    <property type="entry name" value="MiaB/RimO family radical SAM methylthiotransferase"/>
    <property type="match status" value="1"/>
</dbReference>
<dbReference type="PANTHER" id="PTHR43020">
    <property type="entry name" value="CDK5 REGULATORY SUBUNIT-ASSOCIATED PROTEIN 1"/>
    <property type="match status" value="1"/>
</dbReference>
<dbReference type="PANTHER" id="PTHR43020:SF2">
    <property type="entry name" value="MITOCHONDRIAL TRNA METHYLTHIOTRANSFERASE CDK5RAP1"/>
    <property type="match status" value="1"/>
</dbReference>
<dbReference type="Pfam" id="PF04055">
    <property type="entry name" value="Radical_SAM"/>
    <property type="match status" value="1"/>
</dbReference>
<dbReference type="Pfam" id="PF01938">
    <property type="entry name" value="TRAM"/>
    <property type="match status" value="1"/>
</dbReference>
<dbReference type="Pfam" id="PF00919">
    <property type="entry name" value="UPF0004"/>
    <property type="match status" value="1"/>
</dbReference>
<dbReference type="SFLD" id="SFLDF00273">
    <property type="entry name" value="(dimethylallyl)adenosine_tRNA"/>
    <property type="match status" value="1"/>
</dbReference>
<dbReference type="SFLD" id="SFLDG01082">
    <property type="entry name" value="B12-binding_domain_containing"/>
    <property type="match status" value="1"/>
</dbReference>
<dbReference type="SFLD" id="SFLDG01061">
    <property type="entry name" value="methylthiotransferase"/>
    <property type="match status" value="1"/>
</dbReference>
<dbReference type="SMART" id="SM00729">
    <property type="entry name" value="Elp3"/>
    <property type="match status" value="1"/>
</dbReference>
<dbReference type="SUPFAM" id="SSF102114">
    <property type="entry name" value="Radical SAM enzymes"/>
    <property type="match status" value="1"/>
</dbReference>
<dbReference type="PROSITE" id="PS51449">
    <property type="entry name" value="MTTASE_N"/>
    <property type="match status" value="1"/>
</dbReference>
<dbReference type="PROSITE" id="PS01278">
    <property type="entry name" value="MTTASE_RADICAL"/>
    <property type="match status" value="1"/>
</dbReference>
<dbReference type="PROSITE" id="PS51918">
    <property type="entry name" value="RADICAL_SAM"/>
    <property type="match status" value="1"/>
</dbReference>
<dbReference type="PROSITE" id="PS50926">
    <property type="entry name" value="TRAM"/>
    <property type="match status" value="1"/>
</dbReference>
<evidence type="ECO:0000255" key="1">
    <source>
        <dbReference type="HAMAP-Rule" id="MF_01864"/>
    </source>
</evidence>
<evidence type="ECO:0000255" key="2">
    <source>
        <dbReference type="PROSITE-ProRule" id="PRU01266"/>
    </source>
</evidence>
<comment type="function">
    <text evidence="1">Catalyzes the methylthiolation of N6-(dimethylallyl)adenosine (i(6)A), leading to the formation of 2-methylthio-N6-(dimethylallyl)adenosine (ms(2)i(6)A) at position 37 in tRNAs that read codons beginning with uridine.</text>
</comment>
<comment type="catalytic activity">
    <reaction evidence="1">
        <text>N(6)-dimethylallyladenosine(37) in tRNA + (sulfur carrier)-SH + AH2 + 2 S-adenosyl-L-methionine = 2-methylsulfanyl-N(6)-dimethylallyladenosine(37) in tRNA + (sulfur carrier)-H + 5'-deoxyadenosine + L-methionine + A + S-adenosyl-L-homocysteine + 2 H(+)</text>
        <dbReference type="Rhea" id="RHEA:37067"/>
        <dbReference type="Rhea" id="RHEA-COMP:10375"/>
        <dbReference type="Rhea" id="RHEA-COMP:10376"/>
        <dbReference type="Rhea" id="RHEA-COMP:14737"/>
        <dbReference type="Rhea" id="RHEA-COMP:14739"/>
        <dbReference type="ChEBI" id="CHEBI:13193"/>
        <dbReference type="ChEBI" id="CHEBI:15378"/>
        <dbReference type="ChEBI" id="CHEBI:17319"/>
        <dbReference type="ChEBI" id="CHEBI:17499"/>
        <dbReference type="ChEBI" id="CHEBI:29917"/>
        <dbReference type="ChEBI" id="CHEBI:57844"/>
        <dbReference type="ChEBI" id="CHEBI:57856"/>
        <dbReference type="ChEBI" id="CHEBI:59789"/>
        <dbReference type="ChEBI" id="CHEBI:64428"/>
        <dbReference type="ChEBI" id="CHEBI:74415"/>
        <dbReference type="ChEBI" id="CHEBI:74417"/>
        <dbReference type="EC" id="2.8.4.3"/>
    </reaction>
</comment>
<comment type="cofactor">
    <cofactor evidence="1">
        <name>[4Fe-4S] cluster</name>
        <dbReference type="ChEBI" id="CHEBI:49883"/>
    </cofactor>
    <text evidence="1">Binds 2 [4Fe-4S] clusters. One cluster is coordinated with 3 cysteines and an exchangeable S-adenosyl-L-methionine.</text>
</comment>
<comment type="subunit">
    <text evidence="1">Monomer.</text>
</comment>
<comment type="subcellular location">
    <subcellularLocation>
        <location evidence="1">Cytoplasm</location>
    </subcellularLocation>
</comment>
<comment type="similarity">
    <text evidence="1">Belongs to the methylthiotransferase family. MiaB subfamily.</text>
</comment>
<gene>
    <name evidence="1" type="primary">miaB</name>
    <name type="ordered locus">BTH_I0591</name>
</gene>
<proteinExistence type="inferred from homology"/>
<name>MIAB_BURTA</name>
<keyword id="KW-0004">4Fe-4S</keyword>
<keyword id="KW-0963">Cytoplasm</keyword>
<keyword id="KW-0408">Iron</keyword>
<keyword id="KW-0411">Iron-sulfur</keyword>
<keyword id="KW-0479">Metal-binding</keyword>
<keyword id="KW-0949">S-adenosyl-L-methionine</keyword>
<keyword id="KW-0808">Transferase</keyword>
<keyword id="KW-0819">tRNA processing</keyword>
<organism>
    <name type="scientific">Burkholderia thailandensis (strain ATCC 700388 / DSM 13276 / CCUG 48851 / CIP 106301 / E264)</name>
    <dbReference type="NCBI Taxonomy" id="271848"/>
    <lineage>
        <taxon>Bacteria</taxon>
        <taxon>Pseudomonadati</taxon>
        <taxon>Pseudomonadota</taxon>
        <taxon>Betaproteobacteria</taxon>
        <taxon>Burkholderiales</taxon>
        <taxon>Burkholderiaceae</taxon>
        <taxon>Burkholderia</taxon>
        <taxon>pseudomallei group</taxon>
    </lineage>
</organism>
<sequence length="457" mass="50695">MTKKVYVKTFGCQMNEYDSDKMVDVLNAAEGLEKTDSPEDADIILFNTCSVREKAQEKVFSDLGRVRELKEAKPDLLIGVGGCVASQEGASIVARAPYVDLVFGPQTLHRLPQMIDARRESGRAQVDITFPEIEKFDHLPPARVEGPSAFVSIMEGCSKYCSYCVVPYTRGDEVSRPLDDVLTEIAGLADQGVREVTLLGQNVNAYRGALTAGAHEIADFATLIEYVADIPGIERIRYTTSHPKEFTQRLLDVYAKVPKLVDHLHLPVQHGSDRILMAMKRGYTVLEYKSLIRKLRAIRPNLSLSTDIIVGFPGETEADFDKTMALVHEMSYDTSFSFIYSPRPGTPAANLADDTPREVKLERLQHLQATIEENVARISQSMLGKVERILVEGPSRKDPNELAGRTENNRVVNFPAPLTAHARLIGQMIDVKINHAYPHSLRGELVLAHDDASAATH</sequence>
<feature type="chain" id="PRO_0000374190" description="tRNA-2-methylthio-N(6)-dimethylallyladenosine synthase">
    <location>
        <begin position="1"/>
        <end position="457"/>
    </location>
</feature>
<feature type="domain" description="MTTase N-terminal" evidence="1">
    <location>
        <begin position="3"/>
        <end position="120"/>
    </location>
</feature>
<feature type="domain" description="Radical SAM core" evidence="2">
    <location>
        <begin position="143"/>
        <end position="377"/>
    </location>
</feature>
<feature type="domain" description="TRAM" evidence="1">
    <location>
        <begin position="380"/>
        <end position="447"/>
    </location>
</feature>
<feature type="binding site" evidence="1">
    <location>
        <position position="12"/>
    </location>
    <ligand>
        <name>[4Fe-4S] cluster</name>
        <dbReference type="ChEBI" id="CHEBI:49883"/>
        <label>1</label>
    </ligand>
</feature>
<feature type="binding site" evidence="1">
    <location>
        <position position="49"/>
    </location>
    <ligand>
        <name>[4Fe-4S] cluster</name>
        <dbReference type="ChEBI" id="CHEBI:49883"/>
        <label>1</label>
    </ligand>
</feature>
<feature type="binding site" evidence="1">
    <location>
        <position position="83"/>
    </location>
    <ligand>
        <name>[4Fe-4S] cluster</name>
        <dbReference type="ChEBI" id="CHEBI:49883"/>
        <label>1</label>
    </ligand>
</feature>
<feature type="binding site" evidence="1">
    <location>
        <position position="157"/>
    </location>
    <ligand>
        <name>[4Fe-4S] cluster</name>
        <dbReference type="ChEBI" id="CHEBI:49883"/>
        <label>2</label>
        <note>4Fe-4S-S-AdoMet</note>
    </ligand>
</feature>
<feature type="binding site" evidence="1">
    <location>
        <position position="161"/>
    </location>
    <ligand>
        <name>[4Fe-4S] cluster</name>
        <dbReference type="ChEBI" id="CHEBI:49883"/>
        <label>2</label>
        <note>4Fe-4S-S-AdoMet</note>
    </ligand>
</feature>
<feature type="binding site" evidence="1">
    <location>
        <position position="164"/>
    </location>
    <ligand>
        <name>[4Fe-4S] cluster</name>
        <dbReference type="ChEBI" id="CHEBI:49883"/>
        <label>2</label>
        <note>4Fe-4S-S-AdoMet</note>
    </ligand>
</feature>